<feature type="chain" id="PRO_1000082688" description="UDP-N-acetylmuramoylalanine--D-glutamate ligase">
    <location>
        <begin position="1"/>
        <end position="445"/>
    </location>
</feature>
<feature type="binding site" evidence="1">
    <location>
        <begin position="117"/>
        <end position="123"/>
    </location>
    <ligand>
        <name>ATP</name>
        <dbReference type="ChEBI" id="CHEBI:30616"/>
    </ligand>
</feature>
<proteinExistence type="inferred from homology"/>
<reference key="1">
    <citation type="journal article" date="2008" name="Genomics">
        <title>Characterization of ST-4821 complex, a unique Neisseria meningitidis clone.</title>
        <authorList>
            <person name="Peng J."/>
            <person name="Yang L."/>
            <person name="Yang F."/>
            <person name="Yang J."/>
            <person name="Yan Y."/>
            <person name="Nie H."/>
            <person name="Zhang X."/>
            <person name="Xiong Z."/>
            <person name="Jiang Y."/>
            <person name="Cheng F."/>
            <person name="Xu X."/>
            <person name="Chen S."/>
            <person name="Sun L."/>
            <person name="Li W."/>
            <person name="Shen Y."/>
            <person name="Shao Z."/>
            <person name="Liang X."/>
            <person name="Xu J."/>
            <person name="Jin Q."/>
        </authorList>
    </citation>
    <scope>NUCLEOTIDE SEQUENCE [LARGE SCALE GENOMIC DNA]</scope>
    <source>
        <strain>053442</strain>
    </source>
</reference>
<keyword id="KW-0067">ATP-binding</keyword>
<keyword id="KW-0131">Cell cycle</keyword>
<keyword id="KW-0132">Cell division</keyword>
<keyword id="KW-0133">Cell shape</keyword>
<keyword id="KW-0961">Cell wall biogenesis/degradation</keyword>
<keyword id="KW-0963">Cytoplasm</keyword>
<keyword id="KW-0436">Ligase</keyword>
<keyword id="KW-0547">Nucleotide-binding</keyword>
<keyword id="KW-0573">Peptidoglycan synthesis</keyword>
<name>MURD_NEIM0</name>
<accession>A9M2H5</accession>
<evidence type="ECO:0000255" key="1">
    <source>
        <dbReference type="HAMAP-Rule" id="MF_00639"/>
    </source>
</evidence>
<organism>
    <name type="scientific">Neisseria meningitidis serogroup C (strain 053442)</name>
    <dbReference type="NCBI Taxonomy" id="374833"/>
    <lineage>
        <taxon>Bacteria</taxon>
        <taxon>Pseudomonadati</taxon>
        <taxon>Pseudomonadota</taxon>
        <taxon>Betaproteobacteria</taxon>
        <taxon>Neisseriales</taxon>
        <taxon>Neisseriaceae</taxon>
        <taxon>Neisseria</taxon>
    </lineage>
</organism>
<sequence length="445" mass="48258">MTFQNKKILVAGLGGTGISMIAYLRKNGVEVAAYDAELKPERVAQIGKMFDGLVFYTGRLKDALDNGFDILALSPGISERQPDIEAFKQNGGRVLGDIELLADIVNRRGDKVIAITGSNGKTTVTSLVGYLCIKCGLDTVIAGNIGTPVLEAEWQREGKKADVWVLELSSFQLENTESLRPTAATVLNISEDHLDRYDDLLDYAHTKDKIFRGDGVQVLNADDAFCRAMKRAGREVKWFSLEYEADFWLERETGRLKQGNEDLIATQDIPLQGLHNATNVMAAVALCEAVGLPREALLEHVKTFQGLPHRVEKIGEKNGVVFIDDSKGTNVGATAAAIAGLQNPLFVILGGMGKGQDFTPLRDALAGKAKGVFLIGVDALQIRRDLDGCDLNMTDCATLEEAVQKAYAQAEAGDIVLLSPACASFDMFKGYAHRSEVFIGAFKAL</sequence>
<protein>
    <recommendedName>
        <fullName evidence="1">UDP-N-acetylmuramoylalanine--D-glutamate ligase</fullName>
        <ecNumber evidence="1">6.3.2.9</ecNumber>
    </recommendedName>
    <alternativeName>
        <fullName evidence="1">D-glutamic acid-adding enzyme</fullName>
    </alternativeName>
    <alternativeName>
        <fullName evidence="1">UDP-N-acetylmuramoyl-L-alanyl-D-glutamate synthetase</fullName>
    </alternativeName>
</protein>
<comment type="function">
    <text evidence="1">Cell wall formation. Catalyzes the addition of glutamate to the nucleotide precursor UDP-N-acetylmuramoyl-L-alanine (UMA).</text>
</comment>
<comment type="catalytic activity">
    <reaction evidence="1">
        <text>UDP-N-acetyl-alpha-D-muramoyl-L-alanine + D-glutamate + ATP = UDP-N-acetyl-alpha-D-muramoyl-L-alanyl-D-glutamate + ADP + phosphate + H(+)</text>
        <dbReference type="Rhea" id="RHEA:16429"/>
        <dbReference type="ChEBI" id="CHEBI:15378"/>
        <dbReference type="ChEBI" id="CHEBI:29986"/>
        <dbReference type="ChEBI" id="CHEBI:30616"/>
        <dbReference type="ChEBI" id="CHEBI:43474"/>
        <dbReference type="ChEBI" id="CHEBI:83898"/>
        <dbReference type="ChEBI" id="CHEBI:83900"/>
        <dbReference type="ChEBI" id="CHEBI:456216"/>
        <dbReference type="EC" id="6.3.2.9"/>
    </reaction>
</comment>
<comment type="pathway">
    <text evidence="1">Cell wall biogenesis; peptidoglycan biosynthesis.</text>
</comment>
<comment type="subcellular location">
    <subcellularLocation>
        <location evidence="1">Cytoplasm</location>
    </subcellularLocation>
</comment>
<comment type="similarity">
    <text evidence="1">Belongs to the MurCDEF family.</text>
</comment>
<dbReference type="EC" id="6.3.2.9" evidence="1"/>
<dbReference type="EMBL" id="CP000381">
    <property type="protein sequence ID" value="ABX73867.1"/>
    <property type="molecule type" value="Genomic_DNA"/>
</dbReference>
<dbReference type="RefSeq" id="WP_012221991.1">
    <property type="nucleotide sequence ID" value="NC_010120.1"/>
</dbReference>
<dbReference type="SMR" id="A9M2H5"/>
<dbReference type="KEGG" id="nmn:NMCC_1724"/>
<dbReference type="HOGENOM" id="CLU_032540_1_0_4"/>
<dbReference type="UniPathway" id="UPA00219"/>
<dbReference type="Proteomes" id="UP000001177">
    <property type="component" value="Chromosome"/>
</dbReference>
<dbReference type="GO" id="GO:0005737">
    <property type="term" value="C:cytoplasm"/>
    <property type="evidence" value="ECO:0007669"/>
    <property type="project" value="UniProtKB-SubCell"/>
</dbReference>
<dbReference type="GO" id="GO:0005524">
    <property type="term" value="F:ATP binding"/>
    <property type="evidence" value="ECO:0007669"/>
    <property type="project" value="UniProtKB-UniRule"/>
</dbReference>
<dbReference type="GO" id="GO:0008764">
    <property type="term" value="F:UDP-N-acetylmuramoylalanine-D-glutamate ligase activity"/>
    <property type="evidence" value="ECO:0007669"/>
    <property type="project" value="UniProtKB-UniRule"/>
</dbReference>
<dbReference type="GO" id="GO:0051301">
    <property type="term" value="P:cell division"/>
    <property type="evidence" value="ECO:0007669"/>
    <property type="project" value="UniProtKB-KW"/>
</dbReference>
<dbReference type="GO" id="GO:0071555">
    <property type="term" value="P:cell wall organization"/>
    <property type="evidence" value="ECO:0007669"/>
    <property type="project" value="UniProtKB-KW"/>
</dbReference>
<dbReference type="GO" id="GO:0009252">
    <property type="term" value="P:peptidoglycan biosynthetic process"/>
    <property type="evidence" value="ECO:0007669"/>
    <property type="project" value="UniProtKB-UniRule"/>
</dbReference>
<dbReference type="GO" id="GO:0008360">
    <property type="term" value="P:regulation of cell shape"/>
    <property type="evidence" value="ECO:0007669"/>
    <property type="project" value="UniProtKB-KW"/>
</dbReference>
<dbReference type="Gene3D" id="3.90.190.20">
    <property type="entry name" value="Mur ligase, C-terminal domain"/>
    <property type="match status" value="1"/>
</dbReference>
<dbReference type="Gene3D" id="3.40.1190.10">
    <property type="entry name" value="Mur-like, catalytic domain"/>
    <property type="match status" value="1"/>
</dbReference>
<dbReference type="Gene3D" id="3.40.50.720">
    <property type="entry name" value="NAD(P)-binding Rossmann-like Domain"/>
    <property type="match status" value="1"/>
</dbReference>
<dbReference type="HAMAP" id="MF_00639">
    <property type="entry name" value="MurD"/>
    <property type="match status" value="1"/>
</dbReference>
<dbReference type="InterPro" id="IPR036565">
    <property type="entry name" value="Mur-like_cat_sf"/>
</dbReference>
<dbReference type="InterPro" id="IPR004101">
    <property type="entry name" value="Mur_ligase_C"/>
</dbReference>
<dbReference type="InterPro" id="IPR036615">
    <property type="entry name" value="Mur_ligase_C_dom_sf"/>
</dbReference>
<dbReference type="InterPro" id="IPR013221">
    <property type="entry name" value="Mur_ligase_cen"/>
</dbReference>
<dbReference type="InterPro" id="IPR005762">
    <property type="entry name" value="MurD"/>
</dbReference>
<dbReference type="NCBIfam" id="TIGR01087">
    <property type="entry name" value="murD"/>
    <property type="match status" value="1"/>
</dbReference>
<dbReference type="PANTHER" id="PTHR43692">
    <property type="entry name" value="UDP-N-ACETYLMURAMOYLALANINE--D-GLUTAMATE LIGASE"/>
    <property type="match status" value="1"/>
</dbReference>
<dbReference type="PANTHER" id="PTHR43692:SF1">
    <property type="entry name" value="UDP-N-ACETYLMURAMOYLALANINE--D-GLUTAMATE LIGASE"/>
    <property type="match status" value="1"/>
</dbReference>
<dbReference type="Pfam" id="PF02875">
    <property type="entry name" value="Mur_ligase_C"/>
    <property type="match status" value="1"/>
</dbReference>
<dbReference type="Pfam" id="PF08245">
    <property type="entry name" value="Mur_ligase_M"/>
    <property type="match status" value="1"/>
</dbReference>
<dbReference type="Pfam" id="PF21799">
    <property type="entry name" value="MurD-like_N"/>
    <property type="match status" value="1"/>
</dbReference>
<dbReference type="SUPFAM" id="SSF51984">
    <property type="entry name" value="MurCD N-terminal domain"/>
    <property type="match status" value="1"/>
</dbReference>
<dbReference type="SUPFAM" id="SSF53623">
    <property type="entry name" value="MurD-like peptide ligases, catalytic domain"/>
    <property type="match status" value="1"/>
</dbReference>
<dbReference type="SUPFAM" id="SSF53244">
    <property type="entry name" value="MurD-like peptide ligases, peptide-binding domain"/>
    <property type="match status" value="1"/>
</dbReference>
<gene>
    <name evidence="1" type="primary">murD</name>
    <name type="ordered locus">NMCC_1724</name>
</gene>